<gene>
    <name type="ordered locus">Kcr_1502</name>
</gene>
<name>PNPH_KORCO</name>
<feature type="chain" id="PRO_0000415085" description="Probable 6-oxopurine nucleoside phosphorylase">
    <location>
        <begin position="1"/>
        <end position="270"/>
    </location>
</feature>
<feature type="binding site" evidence="1">
    <location>
        <position position="10"/>
    </location>
    <ligand>
        <name>phosphate</name>
        <dbReference type="ChEBI" id="CHEBI:43474"/>
    </ligand>
</feature>
<feature type="binding site" evidence="1">
    <location>
        <begin position="48"/>
        <end position="49"/>
    </location>
    <ligand>
        <name>phosphate</name>
        <dbReference type="ChEBI" id="CHEBI:43474"/>
    </ligand>
</feature>
<feature type="binding site" evidence="1">
    <location>
        <position position="191"/>
    </location>
    <ligand>
        <name>substrate</name>
    </ligand>
</feature>
<feature type="binding site" evidence="1">
    <location>
        <position position="192"/>
    </location>
    <ligand>
        <name>phosphate</name>
        <dbReference type="ChEBI" id="CHEBI:43474"/>
    </ligand>
</feature>
<feature type="binding site" evidence="1">
    <location>
        <begin position="215"/>
        <end position="217"/>
    </location>
    <ligand>
        <name>substrate</name>
    </ligand>
</feature>
<feature type="site" description="Important for substrate specificity" evidence="1">
    <location>
        <position position="173"/>
    </location>
</feature>
<feature type="site" description="Important for substrate specificity" evidence="1">
    <location>
        <position position="228"/>
    </location>
</feature>
<sequence length="270" mass="29588">MVRVGIIGGSGLYELLENPRIVRLDTPFGHCDVQLGELAGEEVAFIPRHGASHRLPPYKVNYKANLYALNMLEVERIIATNAVGSINPALEPGTIVIPHDFIDMTKCRDVTFYDGETTIKVRGREVSGVVHVSMTPYTYCPEIRASIIEAAEHMGLGVRDGGVYVCTEGNRFETPAEIRAFSILGGDIVGMTGCPEASLARELAICYASISVVTNYAAGVSGAVKLTQGEVIEIFSRKIQDISRLIEETIRRIPKRRECPCKDALSEYLK</sequence>
<reference key="1">
    <citation type="journal article" date="2008" name="Proc. Natl. Acad. Sci. U.S.A.">
        <title>A korarchaeal genome reveals new insights into the evolution of the Archaea.</title>
        <authorList>
            <person name="Elkins J.G."/>
            <person name="Podar M."/>
            <person name="Graham D.E."/>
            <person name="Makarova K.S."/>
            <person name="Wolf Y."/>
            <person name="Randau L."/>
            <person name="Hedlund B.P."/>
            <person name="Brochier-Armanet C."/>
            <person name="Kunin V."/>
            <person name="Anderson I."/>
            <person name="Lapidus A."/>
            <person name="Goltsman E."/>
            <person name="Barry K."/>
            <person name="Koonin E.V."/>
            <person name="Hugenholtz P."/>
            <person name="Kyrpides N."/>
            <person name="Wanner G."/>
            <person name="Richardson P."/>
            <person name="Keller M."/>
            <person name="Stetter K.O."/>
        </authorList>
    </citation>
    <scope>NUCLEOTIDE SEQUENCE [LARGE SCALE GENOMIC DNA]</scope>
    <source>
        <strain>OPF8</strain>
    </source>
</reference>
<keyword id="KW-0328">Glycosyltransferase</keyword>
<keyword id="KW-0660">Purine salvage</keyword>
<keyword id="KW-1185">Reference proteome</keyword>
<keyword id="KW-0808">Transferase</keyword>
<accession>B1L719</accession>
<protein>
    <recommendedName>
        <fullName evidence="1">Probable 6-oxopurine nucleoside phosphorylase</fullName>
        <ecNumber evidence="1">2.4.2.1</ecNumber>
    </recommendedName>
    <alternativeName>
        <fullName evidence="1">Purine nucleoside phosphorylase</fullName>
        <shortName evidence="1">PNP</shortName>
    </alternativeName>
</protein>
<proteinExistence type="inferred from homology"/>
<organism>
    <name type="scientific">Korarchaeum cryptofilum (strain OPF8)</name>
    <dbReference type="NCBI Taxonomy" id="374847"/>
    <lineage>
        <taxon>Archaea</taxon>
        <taxon>Thermoproteota</taxon>
        <taxon>Candidatus Korarchaeia</taxon>
        <taxon>Candidatus Korarchaeales</taxon>
        <taxon>Candidatus Korarchaeaceae</taxon>
        <taxon>Candidatus Korarchaeum</taxon>
    </lineage>
</organism>
<comment type="function">
    <text evidence="1">Purine nucleoside phosphorylase which is highly specific for 6-oxopurine nucleosides. Cleaves guanosine or inosine to respective bases and sugar-1-phosphate molecules. Involved in purine salvage.</text>
</comment>
<comment type="catalytic activity">
    <reaction evidence="1">
        <text>a purine D-ribonucleoside + phosphate = a purine nucleobase + alpha-D-ribose 1-phosphate</text>
        <dbReference type="Rhea" id="RHEA:19805"/>
        <dbReference type="ChEBI" id="CHEBI:26386"/>
        <dbReference type="ChEBI" id="CHEBI:43474"/>
        <dbReference type="ChEBI" id="CHEBI:57720"/>
        <dbReference type="ChEBI" id="CHEBI:142355"/>
        <dbReference type="EC" id="2.4.2.1"/>
    </reaction>
</comment>
<comment type="pathway">
    <text evidence="1">Purine metabolism; purine nucleoside salvage.</text>
</comment>
<comment type="subunit">
    <text evidence="1">Homohexamer. Dimer of a homotrimer.</text>
</comment>
<comment type="miscellaneous">
    <text evidence="1">Although this enzyme belongs to the family of MTA phosphorylases based on sequence homology, it has been shown that conserved amino acid substitutions in the substrate binding pocket convert the substrate specificity of this enzyme from 6-aminopurines to 6-oxopurines.</text>
</comment>
<comment type="similarity">
    <text evidence="1">Belongs to the PNP/MTAP phosphorylase family. MTAP subfamily.</text>
</comment>
<dbReference type="EC" id="2.4.2.1" evidence="1"/>
<dbReference type="EMBL" id="CP000968">
    <property type="protein sequence ID" value="ACB08248.1"/>
    <property type="molecule type" value="Genomic_DNA"/>
</dbReference>
<dbReference type="RefSeq" id="WP_012310145.1">
    <property type="nucleotide sequence ID" value="NC_010482.1"/>
</dbReference>
<dbReference type="SMR" id="B1L719"/>
<dbReference type="FunCoup" id="B1L719">
    <property type="interactions" value="173"/>
</dbReference>
<dbReference type="STRING" id="374847.Kcr_1502"/>
<dbReference type="EnsemblBacteria" id="ACB08248">
    <property type="protein sequence ID" value="ACB08248"/>
    <property type="gene ID" value="Kcr_1502"/>
</dbReference>
<dbReference type="GeneID" id="6094779"/>
<dbReference type="KEGG" id="kcr:Kcr_1502"/>
<dbReference type="eggNOG" id="arCOG01327">
    <property type="taxonomic scope" value="Archaea"/>
</dbReference>
<dbReference type="HOGENOM" id="CLU_054456_0_2_2"/>
<dbReference type="InParanoid" id="B1L719"/>
<dbReference type="OrthoDB" id="7681at2157"/>
<dbReference type="PhylomeDB" id="B1L719"/>
<dbReference type="UniPathway" id="UPA00606"/>
<dbReference type="Proteomes" id="UP000001686">
    <property type="component" value="Chromosome"/>
</dbReference>
<dbReference type="GO" id="GO:0005829">
    <property type="term" value="C:cytosol"/>
    <property type="evidence" value="ECO:0000318"/>
    <property type="project" value="GO_Central"/>
</dbReference>
<dbReference type="GO" id="GO:0017061">
    <property type="term" value="F:S-methyl-5-thioadenosine phosphorylase activity"/>
    <property type="evidence" value="ECO:0000318"/>
    <property type="project" value="GO_Central"/>
</dbReference>
<dbReference type="GO" id="GO:0019509">
    <property type="term" value="P:L-methionine salvage from methylthioadenosine"/>
    <property type="evidence" value="ECO:0000318"/>
    <property type="project" value="GO_Central"/>
</dbReference>
<dbReference type="GO" id="GO:0006166">
    <property type="term" value="P:purine ribonucleoside salvage"/>
    <property type="evidence" value="ECO:0007669"/>
    <property type="project" value="UniProtKB-UniRule"/>
</dbReference>
<dbReference type="CDD" id="cd09010">
    <property type="entry name" value="MTAP_SsMTAPII_like_MTIP"/>
    <property type="match status" value="1"/>
</dbReference>
<dbReference type="FunFam" id="3.40.50.1580:FF:000012">
    <property type="entry name" value="Probable 6-oxopurine nucleoside phosphorylase"/>
    <property type="match status" value="1"/>
</dbReference>
<dbReference type="Gene3D" id="3.40.50.1580">
    <property type="entry name" value="Nucleoside phosphorylase domain"/>
    <property type="match status" value="1"/>
</dbReference>
<dbReference type="HAMAP" id="MF_01963">
    <property type="entry name" value="MTAP"/>
    <property type="match status" value="1"/>
</dbReference>
<dbReference type="InterPro" id="IPR010044">
    <property type="entry name" value="MTAP"/>
</dbReference>
<dbReference type="InterPro" id="IPR000845">
    <property type="entry name" value="Nucleoside_phosphorylase_d"/>
</dbReference>
<dbReference type="InterPro" id="IPR035994">
    <property type="entry name" value="Nucleoside_phosphorylase_sf"/>
</dbReference>
<dbReference type="NCBIfam" id="NF006599">
    <property type="entry name" value="PRK09136.1"/>
    <property type="match status" value="1"/>
</dbReference>
<dbReference type="PANTHER" id="PTHR42679">
    <property type="entry name" value="S-METHYL-5'-THIOADENOSINE PHOSPHORYLASE"/>
    <property type="match status" value="1"/>
</dbReference>
<dbReference type="PANTHER" id="PTHR42679:SF2">
    <property type="entry name" value="S-METHYL-5'-THIOADENOSINE PHOSPHORYLASE"/>
    <property type="match status" value="1"/>
</dbReference>
<dbReference type="Pfam" id="PF01048">
    <property type="entry name" value="PNP_UDP_1"/>
    <property type="match status" value="1"/>
</dbReference>
<dbReference type="SUPFAM" id="SSF53167">
    <property type="entry name" value="Purine and uridine phosphorylases"/>
    <property type="match status" value="1"/>
</dbReference>
<evidence type="ECO:0000255" key="1">
    <source>
        <dbReference type="HAMAP-Rule" id="MF_01963"/>
    </source>
</evidence>